<sequence>MPVSDSLSPDLPNDDTSEEWLEVGTIVGAHGLNGEVKVYPDSDFPERFTQPGLRWLVSPTEASTPEEIQLIRGRFVERKGIYVVKLANVNFRDQSEALKGTKLLVRSNDRPTLAEGEYYLSDLIGVTVVDHQTQAVVGSVVSLASAGNDLLEIQLDNTTKTILLPFVSALVPIVDIATKRIEITPPKGLIPE</sequence>
<keyword id="KW-0143">Chaperone</keyword>
<keyword id="KW-0963">Cytoplasm</keyword>
<keyword id="KW-1185">Reference proteome</keyword>
<keyword id="KW-0690">Ribosome biogenesis</keyword>
<keyword id="KW-0698">rRNA processing</keyword>
<protein>
    <recommendedName>
        <fullName evidence="1">Ribosome maturation factor RimM</fullName>
    </recommendedName>
</protein>
<comment type="function">
    <text evidence="1">An accessory protein needed during the final step in the assembly of 30S ribosomal subunit, possibly for assembly of the head region. Essential for efficient processing of 16S rRNA. May be needed both before and after RbfA during the maturation of 16S rRNA. It has affinity for free ribosomal 30S subunits but not for 70S ribosomes.</text>
</comment>
<comment type="subunit">
    <text evidence="1">Binds ribosomal protein uS19.</text>
</comment>
<comment type="subcellular location">
    <subcellularLocation>
        <location evidence="1">Cytoplasm</location>
    </subcellularLocation>
</comment>
<comment type="domain">
    <text evidence="1">The PRC barrel domain binds ribosomal protein uS19.</text>
</comment>
<comment type="similarity">
    <text evidence="1">Belongs to the RimM family.</text>
</comment>
<name>RIMM_ACAM1</name>
<gene>
    <name evidence="1" type="primary">rimM</name>
    <name type="ordered locus">AM1_2027</name>
</gene>
<proteinExistence type="inferred from homology"/>
<organism>
    <name type="scientific">Acaryochloris marina (strain MBIC 11017)</name>
    <dbReference type="NCBI Taxonomy" id="329726"/>
    <lineage>
        <taxon>Bacteria</taxon>
        <taxon>Bacillati</taxon>
        <taxon>Cyanobacteriota</taxon>
        <taxon>Cyanophyceae</taxon>
        <taxon>Acaryochloridales</taxon>
        <taxon>Acaryochloridaceae</taxon>
        <taxon>Acaryochloris</taxon>
    </lineage>
</organism>
<reference key="1">
    <citation type="journal article" date="2008" name="Proc. Natl. Acad. Sci. U.S.A.">
        <title>Niche adaptation and genome expansion in the chlorophyll d-producing cyanobacterium Acaryochloris marina.</title>
        <authorList>
            <person name="Swingley W.D."/>
            <person name="Chen M."/>
            <person name="Cheung P.C."/>
            <person name="Conrad A.L."/>
            <person name="Dejesa L.C."/>
            <person name="Hao J."/>
            <person name="Honchak B.M."/>
            <person name="Karbach L.E."/>
            <person name="Kurdoglu A."/>
            <person name="Lahiri S."/>
            <person name="Mastrian S.D."/>
            <person name="Miyashita H."/>
            <person name="Page L."/>
            <person name="Ramakrishna P."/>
            <person name="Satoh S."/>
            <person name="Sattley W.M."/>
            <person name="Shimada Y."/>
            <person name="Taylor H.L."/>
            <person name="Tomo T."/>
            <person name="Tsuchiya T."/>
            <person name="Wang Z.T."/>
            <person name="Raymond J."/>
            <person name="Mimuro M."/>
            <person name="Blankenship R.E."/>
            <person name="Touchman J.W."/>
        </authorList>
    </citation>
    <scope>NUCLEOTIDE SEQUENCE [LARGE SCALE GENOMIC DNA]</scope>
    <source>
        <strain>MBIC 11017</strain>
    </source>
</reference>
<accession>B0CFM3</accession>
<evidence type="ECO:0000255" key="1">
    <source>
        <dbReference type="HAMAP-Rule" id="MF_00014"/>
    </source>
</evidence>
<feature type="chain" id="PRO_0000351712" description="Ribosome maturation factor RimM">
    <location>
        <begin position="1"/>
        <end position="192"/>
    </location>
</feature>
<feature type="domain" description="PRC barrel" evidence="1">
    <location>
        <begin position="115"/>
        <end position="189"/>
    </location>
</feature>
<dbReference type="EMBL" id="CP000828">
    <property type="protein sequence ID" value="ABW27042.1"/>
    <property type="molecule type" value="Genomic_DNA"/>
</dbReference>
<dbReference type="RefSeq" id="WP_012162534.1">
    <property type="nucleotide sequence ID" value="NC_009925.1"/>
</dbReference>
<dbReference type="SMR" id="B0CFM3"/>
<dbReference type="STRING" id="329726.AM1_2027"/>
<dbReference type="KEGG" id="amr:AM1_2027"/>
<dbReference type="eggNOG" id="COG0806">
    <property type="taxonomic scope" value="Bacteria"/>
</dbReference>
<dbReference type="HOGENOM" id="CLU_077636_3_0_3"/>
<dbReference type="OrthoDB" id="9810331at2"/>
<dbReference type="Proteomes" id="UP000000268">
    <property type="component" value="Chromosome"/>
</dbReference>
<dbReference type="GO" id="GO:0005737">
    <property type="term" value="C:cytoplasm"/>
    <property type="evidence" value="ECO:0007669"/>
    <property type="project" value="UniProtKB-SubCell"/>
</dbReference>
<dbReference type="GO" id="GO:0005840">
    <property type="term" value="C:ribosome"/>
    <property type="evidence" value="ECO:0007669"/>
    <property type="project" value="InterPro"/>
</dbReference>
<dbReference type="GO" id="GO:0043022">
    <property type="term" value="F:ribosome binding"/>
    <property type="evidence" value="ECO:0007669"/>
    <property type="project" value="InterPro"/>
</dbReference>
<dbReference type="GO" id="GO:0042274">
    <property type="term" value="P:ribosomal small subunit biogenesis"/>
    <property type="evidence" value="ECO:0007669"/>
    <property type="project" value="UniProtKB-UniRule"/>
</dbReference>
<dbReference type="GO" id="GO:0006364">
    <property type="term" value="P:rRNA processing"/>
    <property type="evidence" value="ECO:0007669"/>
    <property type="project" value="UniProtKB-UniRule"/>
</dbReference>
<dbReference type="Gene3D" id="2.30.30.240">
    <property type="entry name" value="PRC-barrel domain"/>
    <property type="match status" value="1"/>
</dbReference>
<dbReference type="Gene3D" id="2.40.30.60">
    <property type="entry name" value="RimM"/>
    <property type="match status" value="1"/>
</dbReference>
<dbReference type="HAMAP" id="MF_00014">
    <property type="entry name" value="Ribosome_mat_RimM"/>
    <property type="match status" value="1"/>
</dbReference>
<dbReference type="InterPro" id="IPR011033">
    <property type="entry name" value="PRC_barrel-like_sf"/>
</dbReference>
<dbReference type="InterPro" id="IPR056792">
    <property type="entry name" value="PRC_RimM"/>
</dbReference>
<dbReference type="InterPro" id="IPR011961">
    <property type="entry name" value="RimM"/>
</dbReference>
<dbReference type="InterPro" id="IPR002676">
    <property type="entry name" value="RimM_N"/>
</dbReference>
<dbReference type="InterPro" id="IPR036976">
    <property type="entry name" value="RimM_N_sf"/>
</dbReference>
<dbReference type="InterPro" id="IPR009000">
    <property type="entry name" value="Transl_B-barrel_sf"/>
</dbReference>
<dbReference type="NCBIfam" id="TIGR02273">
    <property type="entry name" value="16S_RimM"/>
    <property type="match status" value="1"/>
</dbReference>
<dbReference type="PANTHER" id="PTHR33692">
    <property type="entry name" value="RIBOSOME MATURATION FACTOR RIMM"/>
    <property type="match status" value="1"/>
</dbReference>
<dbReference type="PANTHER" id="PTHR33692:SF1">
    <property type="entry name" value="RIBOSOME MATURATION FACTOR RIMM"/>
    <property type="match status" value="1"/>
</dbReference>
<dbReference type="Pfam" id="PF24986">
    <property type="entry name" value="PRC_RimM"/>
    <property type="match status" value="1"/>
</dbReference>
<dbReference type="Pfam" id="PF01782">
    <property type="entry name" value="RimM"/>
    <property type="match status" value="1"/>
</dbReference>
<dbReference type="SUPFAM" id="SSF50346">
    <property type="entry name" value="PRC-barrel domain"/>
    <property type="match status" value="1"/>
</dbReference>
<dbReference type="SUPFAM" id="SSF50447">
    <property type="entry name" value="Translation proteins"/>
    <property type="match status" value="1"/>
</dbReference>